<dbReference type="EMBL" id="AE017261">
    <property type="protein sequence ID" value="AAT43842.1"/>
    <property type="molecule type" value="Genomic_DNA"/>
</dbReference>
<dbReference type="RefSeq" id="WP_011178058.1">
    <property type="nucleotide sequence ID" value="NC_005877.1"/>
</dbReference>
<dbReference type="SMR" id="Q6KZL0"/>
<dbReference type="FunCoup" id="Q6KZL0">
    <property type="interactions" value="65"/>
</dbReference>
<dbReference type="STRING" id="263820.PTO1257"/>
<dbReference type="PaxDb" id="263820-PTO1257"/>
<dbReference type="GeneID" id="2844367"/>
<dbReference type="KEGG" id="pto:PTO1257"/>
<dbReference type="PATRIC" id="fig|263820.9.peg.1305"/>
<dbReference type="eggNOG" id="arCOG00467">
    <property type="taxonomic scope" value="Archaea"/>
</dbReference>
<dbReference type="HOGENOM" id="CLU_025112_3_1_2"/>
<dbReference type="InParanoid" id="Q6KZL0"/>
<dbReference type="OrthoDB" id="195574at2157"/>
<dbReference type="Proteomes" id="UP000000438">
    <property type="component" value="Chromosome"/>
</dbReference>
<dbReference type="GO" id="GO:0005524">
    <property type="term" value="F:ATP binding"/>
    <property type="evidence" value="ECO:0007669"/>
    <property type="project" value="UniProtKB-UniRule"/>
</dbReference>
<dbReference type="GO" id="GO:0016887">
    <property type="term" value="F:ATP hydrolysis activity"/>
    <property type="evidence" value="ECO:0007669"/>
    <property type="project" value="InterPro"/>
</dbReference>
<dbReference type="GO" id="GO:0006260">
    <property type="term" value="P:DNA replication"/>
    <property type="evidence" value="ECO:0007669"/>
    <property type="project" value="UniProtKB-UniRule"/>
</dbReference>
<dbReference type="CDD" id="cd00009">
    <property type="entry name" value="AAA"/>
    <property type="match status" value="1"/>
</dbReference>
<dbReference type="CDD" id="cd08768">
    <property type="entry name" value="Cdc6_C"/>
    <property type="match status" value="1"/>
</dbReference>
<dbReference type="CDD" id="cd18139">
    <property type="entry name" value="HLD_clamp_RarA"/>
    <property type="match status" value="1"/>
</dbReference>
<dbReference type="Gene3D" id="1.10.8.60">
    <property type="match status" value="1"/>
</dbReference>
<dbReference type="Gene3D" id="3.40.50.300">
    <property type="entry name" value="P-loop containing nucleotide triphosphate hydrolases"/>
    <property type="match status" value="1"/>
</dbReference>
<dbReference type="Gene3D" id="1.10.10.10">
    <property type="entry name" value="Winged helix-like DNA-binding domain superfamily/Winged helix DNA-binding domain"/>
    <property type="match status" value="1"/>
</dbReference>
<dbReference type="HAMAP" id="MF_01407">
    <property type="entry name" value="ORC1_type_DNA_replic_protein"/>
    <property type="match status" value="1"/>
</dbReference>
<dbReference type="InterPro" id="IPR003593">
    <property type="entry name" value="AAA+_ATPase"/>
</dbReference>
<dbReference type="InterPro" id="IPR049945">
    <property type="entry name" value="AAA_22"/>
</dbReference>
<dbReference type="InterPro" id="IPR015163">
    <property type="entry name" value="Cdc6_C"/>
</dbReference>
<dbReference type="InterPro" id="IPR055237">
    <property type="entry name" value="Cdc6_lid"/>
</dbReference>
<dbReference type="InterPro" id="IPR050311">
    <property type="entry name" value="ORC1/CDC6"/>
</dbReference>
<dbReference type="InterPro" id="IPR014277">
    <property type="entry name" value="Orc1/Cdc6_arc"/>
</dbReference>
<dbReference type="InterPro" id="IPR027417">
    <property type="entry name" value="P-loop_NTPase"/>
</dbReference>
<dbReference type="InterPro" id="IPR036388">
    <property type="entry name" value="WH-like_DNA-bd_sf"/>
</dbReference>
<dbReference type="InterPro" id="IPR036390">
    <property type="entry name" value="WH_DNA-bd_sf"/>
</dbReference>
<dbReference type="NCBIfam" id="TIGR02928">
    <property type="entry name" value="orc1/cdc6 family replication initiation protein"/>
    <property type="match status" value="1"/>
</dbReference>
<dbReference type="NCBIfam" id="NF001625">
    <property type="entry name" value="PRK00411.1-3"/>
    <property type="match status" value="1"/>
</dbReference>
<dbReference type="PANTHER" id="PTHR10763:SF26">
    <property type="entry name" value="CELL DIVISION CONTROL PROTEIN 6 HOMOLOG"/>
    <property type="match status" value="1"/>
</dbReference>
<dbReference type="PANTHER" id="PTHR10763">
    <property type="entry name" value="CELL DIVISION CONTROL PROTEIN 6-RELATED"/>
    <property type="match status" value="1"/>
</dbReference>
<dbReference type="Pfam" id="PF13401">
    <property type="entry name" value="AAA_22"/>
    <property type="match status" value="1"/>
</dbReference>
<dbReference type="Pfam" id="PF09079">
    <property type="entry name" value="Cdc6_C"/>
    <property type="match status" value="1"/>
</dbReference>
<dbReference type="Pfam" id="PF22703">
    <property type="entry name" value="Cdc6_lid"/>
    <property type="match status" value="1"/>
</dbReference>
<dbReference type="SMART" id="SM00382">
    <property type="entry name" value="AAA"/>
    <property type="match status" value="1"/>
</dbReference>
<dbReference type="SMART" id="SM01074">
    <property type="entry name" value="Cdc6_C"/>
    <property type="match status" value="1"/>
</dbReference>
<dbReference type="SUPFAM" id="SSF52540">
    <property type="entry name" value="P-loop containing nucleoside triphosphate hydrolases"/>
    <property type="match status" value="1"/>
</dbReference>
<dbReference type="SUPFAM" id="SSF46785">
    <property type="entry name" value="Winged helix' DNA-binding domain"/>
    <property type="match status" value="1"/>
</dbReference>
<feature type="chain" id="PRO_0000151010" description="ORC1-type DNA replication protein">
    <location>
        <begin position="1"/>
        <end position="408"/>
    </location>
</feature>
<feature type="binding site" evidence="1">
    <location>
        <begin position="65"/>
        <end position="69"/>
    </location>
    <ligand>
        <name>ATP</name>
        <dbReference type="ChEBI" id="CHEBI:30616"/>
    </ligand>
</feature>
<feature type="binding site" evidence="1">
    <location>
        <position position="205"/>
    </location>
    <ligand>
        <name>ATP</name>
        <dbReference type="ChEBI" id="CHEBI:30616"/>
    </ligand>
</feature>
<feature type="binding site" evidence="1">
    <location>
        <position position="217"/>
    </location>
    <ligand>
        <name>ATP</name>
        <dbReference type="ChEBI" id="CHEBI:30616"/>
    </ligand>
</feature>
<proteinExistence type="inferred from homology"/>
<protein>
    <recommendedName>
        <fullName evidence="1">ORC1-type DNA replication protein</fullName>
    </recommendedName>
</protein>
<comment type="function">
    <text evidence="1">Involved in regulation of DNA replication.</text>
</comment>
<comment type="similarity">
    <text evidence="1">Belongs to the CDC6/cdc18 family.</text>
</comment>
<organism>
    <name type="scientific">Picrophilus torridus (strain ATCC 700027 / DSM 9790 / JCM 10055 / NBRC 100828 / KAW 2/3)</name>
    <dbReference type="NCBI Taxonomy" id="1122961"/>
    <lineage>
        <taxon>Archaea</taxon>
        <taxon>Methanobacteriati</taxon>
        <taxon>Thermoplasmatota</taxon>
        <taxon>Thermoplasmata</taxon>
        <taxon>Thermoplasmatales</taxon>
        <taxon>Picrophilaceae</taxon>
        <taxon>Picrophilus</taxon>
    </lineage>
</organism>
<reference key="1">
    <citation type="journal article" date="2004" name="Proc. Natl. Acad. Sci. U.S.A.">
        <title>Genome sequence of Picrophilus torridus and its implications for life around pH 0.</title>
        <authorList>
            <person name="Fuetterer O."/>
            <person name="Angelov A."/>
            <person name="Liesegang H."/>
            <person name="Gottschalk G."/>
            <person name="Schleper C."/>
            <person name="Schepers B."/>
            <person name="Dock C."/>
            <person name="Antranikian G."/>
            <person name="Liebl W."/>
        </authorList>
    </citation>
    <scope>NUCLEOTIDE SEQUENCE [LARGE SCALE GENOMIC DNA]</scope>
    <source>
        <strain>ATCC 700027 / DSM 9790 / JCM 10055 / NBRC 100828 / KAW 2/3</strain>
    </source>
</reference>
<accession>Q6KZL0</accession>
<keyword id="KW-0067">ATP-binding</keyword>
<keyword id="KW-0235">DNA replication</keyword>
<keyword id="KW-0547">Nucleotide-binding</keyword>
<sequence>MDNPFIKYSRSDDYIIGNLKTLSSSYIPDNLPHREQQIELMARSLSSIMHGGIASNILLYGQSGSGKTSSAINVTNMLRSAAGDRVSIHYINCEIYDSHYSIMVHMVNSFIGEEQIPNLGLPFDRIYYELVKRIKSRNLYTLIILDEIDRLLSKNGSDSLYVILKLLGDTEGSIIGITNDSSFINKLDMRVRSRLNAESIIFTPYNADELRDILKFRINGVIKNGFIEDSAINLCAAIGAQEHGDARKAIELLRIAIEYCIRENRERVTIDDIYMARERFEMNILKESVKTLPIHSKMVLLSAILTQEVSSDIAVTGEIYENYKNICAEIGLQPLSTRRISDLMSSLDDLGLIVTTTRSMGRYGRTKLIKVSQPVAIKNYILEDENFKNFQGSRIVRQSKLRTNYDDI</sequence>
<name>CDC6_PICTO</name>
<evidence type="ECO:0000255" key="1">
    <source>
        <dbReference type="HAMAP-Rule" id="MF_01407"/>
    </source>
</evidence>
<gene>
    <name type="primary">cdc6</name>
    <name type="ordered locus">PTO1257</name>
</gene>